<evidence type="ECO:0000255" key="1">
    <source>
        <dbReference type="HAMAP-Rule" id="MF_01702"/>
    </source>
</evidence>
<name>PSTB_SYNAS</name>
<accession>Q2LTG0</accession>
<sequence length="256" mass="29078">MVTLDTQSIIRTVNVNFYYGRFQALTDITMDFQKNRVTALIGPSGCGKSTLLRLLNRMNDLIDGCRVEGQVLFEDQNIYAPEMDPVEVRRRIGMVFQKPNPFPKTIFDNIAYGPRLHGFRKRSDLEALVESSLQQAVLWEEVKDILPRSAMTLSGGQQQRLCIARALAMKPDVLLMDEPTSALDPISTAKIEELIDELKENYTIIIVTHNMQQAARVSGMTGFFYLGKLIEYNATEKIFTNPEQKQTEDYITGRFG</sequence>
<feature type="chain" id="PRO_0000272564" description="Phosphate import ATP-binding protein PstB">
    <location>
        <begin position="1"/>
        <end position="256"/>
    </location>
</feature>
<feature type="domain" description="ABC transporter" evidence="1">
    <location>
        <begin position="10"/>
        <end position="251"/>
    </location>
</feature>
<feature type="binding site" evidence="1">
    <location>
        <begin position="42"/>
        <end position="49"/>
    </location>
    <ligand>
        <name>ATP</name>
        <dbReference type="ChEBI" id="CHEBI:30616"/>
    </ligand>
</feature>
<proteinExistence type="inferred from homology"/>
<keyword id="KW-0067">ATP-binding</keyword>
<keyword id="KW-0997">Cell inner membrane</keyword>
<keyword id="KW-1003">Cell membrane</keyword>
<keyword id="KW-0472">Membrane</keyword>
<keyword id="KW-0547">Nucleotide-binding</keyword>
<keyword id="KW-0592">Phosphate transport</keyword>
<keyword id="KW-1185">Reference proteome</keyword>
<keyword id="KW-1278">Translocase</keyword>
<keyword id="KW-0813">Transport</keyword>
<protein>
    <recommendedName>
        <fullName evidence="1">Phosphate import ATP-binding protein PstB</fullName>
        <ecNumber evidence="1">7.3.2.1</ecNumber>
    </recommendedName>
    <alternativeName>
        <fullName evidence="1">ABC phosphate transporter</fullName>
    </alternativeName>
    <alternativeName>
        <fullName evidence="1">Phosphate-transporting ATPase</fullName>
    </alternativeName>
</protein>
<comment type="function">
    <text evidence="1">Part of the ABC transporter complex PstSACB involved in phosphate import. Responsible for energy coupling to the transport system.</text>
</comment>
<comment type="catalytic activity">
    <reaction evidence="1">
        <text>phosphate(out) + ATP + H2O = ADP + 2 phosphate(in) + H(+)</text>
        <dbReference type="Rhea" id="RHEA:24440"/>
        <dbReference type="ChEBI" id="CHEBI:15377"/>
        <dbReference type="ChEBI" id="CHEBI:15378"/>
        <dbReference type="ChEBI" id="CHEBI:30616"/>
        <dbReference type="ChEBI" id="CHEBI:43474"/>
        <dbReference type="ChEBI" id="CHEBI:456216"/>
        <dbReference type="EC" id="7.3.2.1"/>
    </reaction>
</comment>
<comment type="subunit">
    <text evidence="1">The complex is composed of two ATP-binding proteins (PstB), two transmembrane proteins (PstC and PstA) and a solute-binding protein (PstS).</text>
</comment>
<comment type="subcellular location">
    <subcellularLocation>
        <location evidence="1">Cell inner membrane</location>
        <topology evidence="1">Peripheral membrane protein</topology>
    </subcellularLocation>
</comment>
<comment type="similarity">
    <text evidence="1">Belongs to the ABC transporter superfamily. Phosphate importer (TC 3.A.1.7) family.</text>
</comment>
<dbReference type="EC" id="7.3.2.1" evidence="1"/>
<dbReference type="EMBL" id="CP000252">
    <property type="protein sequence ID" value="ABC77370.1"/>
    <property type="molecule type" value="Genomic_DNA"/>
</dbReference>
<dbReference type="RefSeq" id="WP_011417392.1">
    <property type="nucleotide sequence ID" value="NC_007759.1"/>
</dbReference>
<dbReference type="SMR" id="Q2LTG0"/>
<dbReference type="FunCoup" id="Q2LTG0">
    <property type="interactions" value="343"/>
</dbReference>
<dbReference type="STRING" id="56780.SYN_00059"/>
<dbReference type="KEGG" id="sat:SYN_00059"/>
<dbReference type="eggNOG" id="COG1117">
    <property type="taxonomic scope" value="Bacteria"/>
</dbReference>
<dbReference type="HOGENOM" id="CLU_000604_1_22_7"/>
<dbReference type="InParanoid" id="Q2LTG0"/>
<dbReference type="OrthoDB" id="9809450at2"/>
<dbReference type="Proteomes" id="UP000001933">
    <property type="component" value="Chromosome"/>
</dbReference>
<dbReference type="GO" id="GO:0005886">
    <property type="term" value="C:plasma membrane"/>
    <property type="evidence" value="ECO:0007669"/>
    <property type="project" value="UniProtKB-SubCell"/>
</dbReference>
<dbReference type="GO" id="GO:0005524">
    <property type="term" value="F:ATP binding"/>
    <property type="evidence" value="ECO:0007669"/>
    <property type="project" value="UniProtKB-KW"/>
</dbReference>
<dbReference type="GO" id="GO:0016887">
    <property type="term" value="F:ATP hydrolysis activity"/>
    <property type="evidence" value="ECO:0007669"/>
    <property type="project" value="InterPro"/>
</dbReference>
<dbReference type="GO" id="GO:0015415">
    <property type="term" value="F:ATPase-coupled phosphate ion transmembrane transporter activity"/>
    <property type="evidence" value="ECO:0007669"/>
    <property type="project" value="UniProtKB-EC"/>
</dbReference>
<dbReference type="GO" id="GO:0035435">
    <property type="term" value="P:phosphate ion transmembrane transport"/>
    <property type="evidence" value="ECO:0007669"/>
    <property type="project" value="InterPro"/>
</dbReference>
<dbReference type="CDD" id="cd03260">
    <property type="entry name" value="ABC_PstB_phosphate_transporter"/>
    <property type="match status" value="1"/>
</dbReference>
<dbReference type="FunFam" id="3.40.50.300:FF:000132">
    <property type="entry name" value="Phosphate import ATP-binding protein PstB"/>
    <property type="match status" value="1"/>
</dbReference>
<dbReference type="Gene3D" id="3.40.50.300">
    <property type="entry name" value="P-loop containing nucleotide triphosphate hydrolases"/>
    <property type="match status" value="1"/>
</dbReference>
<dbReference type="InterPro" id="IPR003593">
    <property type="entry name" value="AAA+_ATPase"/>
</dbReference>
<dbReference type="InterPro" id="IPR003439">
    <property type="entry name" value="ABC_transporter-like_ATP-bd"/>
</dbReference>
<dbReference type="InterPro" id="IPR017871">
    <property type="entry name" value="ABC_transporter-like_CS"/>
</dbReference>
<dbReference type="InterPro" id="IPR027417">
    <property type="entry name" value="P-loop_NTPase"/>
</dbReference>
<dbReference type="InterPro" id="IPR005670">
    <property type="entry name" value="PstB-like"/>
</dbReference>
<dbReference type="NCBIfam" id="TIGR00972">
    <property type="entry name" value="3a0107s01c2"/>
    <property type="match status" value="1"/>
</dbReference>
<dbReference type="PANTHER" id="PTHR43423">
    <property type="entry name" value="ABC TRANSPORTER I FAMILY MEMBER 17"/>
    <property type="match status" value="1"/>
</dbReference>
<dbReference type="PANTHER" id="PTHR43423:SF1">
    <property type="entry name" value="ABC TRANSPORTER I FAMILY MEMBER 17"/>
    <property type="match status" value="1"/>
</dbReference>
<dbReference type="Pfam" id="PF00005">
    <property type="entry name" value="ABC_tran"/>
    <property type="match status" value="1"/>
</dbReference>
<dbReference type="SMART" id="SM00382">
    <property type="entry name" value="AAA"/>
    <property type="match status" value="1"/>
</dbReference>
<dbReference type="SUPFAM" id="SSF52540">
    <property type="entry name" value="P-loop containing nucleoside triphosphate hydrolases"/>
    <property type="match status" value="1"/>
</dbReference>
<dbReference type="PROSITE" id="PS00211">
    <property type="entry name" value="ABC_TRANSPORTER_1"/>
    <property type="match status" value="1"/>
</dbReference>
<dbReference type="PROSITE" id="PS50893">
    <property type="entry name" value="ABC_TRANSPORTER_2"/>
    <property type="match status" value="1"/>
</dbReference>
<dbReference type="PROSITE" id="PS51238">
    <property type="entry name" value="PSTB"/>
    <property type="match status" value="1"/>
</dbReference>
<reference key="1">
    <citation type="journal article" date="2007" name="Proc. Natl. Acad. Sci. U.S.A.">
        <title>The genome of Syntrophus aciditrophicus: life at the thermodynamic limit of microbial growth.</title>
        <authorList>
            <person name="McInerney M.J."/>
            <person name="Rohlin L."/>
            <person name="Mouttaki H."/>
            <person name="Kim U."/>
            <person name="Krupp R.S."/>
            <person name="Rios-Hernandez L."/>
            <person name="Sieber J."/>
            <person name="Struchtemeyer C.G."/>
            <person name="Bhattacharyya A."/>
            <person name="Campbell J.W."/>
            <person name="Gunsalus R.P."/>
        </authorList>
    </citation>
    <scope>NUCLEOTIDE SEQUENCE [LARGE SCALE GENOMIC DNA]</scope>
    <source>
        <strain>SB</strain>
    </source>
</reference>
<organism>
    <name type="scientific">Syntrophus aciditrophicus (strain SB)</name>
    <dbReference type="NCBI Taxonomy" id="56780"/>
    <lineage>
        <taxon>Bacteria</taxon>
        <taxon>Pseudomonadati</taxon>
        <taxon>Thermodesulfobacteriota</taxon>
        <taxon>Syntrophia</taxon>
        <taxon>Syntrophales</taxon>
        <taxon>Syntrophaceae</taxon>
        <taxon>Syntrophus</taxon>
    </lineage>
</organism>
<gene>
    <name evidence="1" type="primary">pstB</name>
    <name type="ordered locus">SYNAS_14910</name>
    <name type="ORF">SYN_00059</name>
</gene>